<evidence type="ECO:0000255" key="1">
    <source>
        <dbReference type="HAMAP-Rule" id="MF_01395"/>
    </source>
</evidence>
<evidence type="ECO:0000255" key="2">
    <source>
        <dbReference type="PROSITE-ProRule" id="PRU01136"/>
    </source>
</evidence>
<reference key="1">
    <citation type="journal article" date="2006" name="J. Bacteriol.">
        <title>Genome sequence of Aeromonas hydrophila ATCC 7966T: jack of all trades.</title>
        <authorList>
            <person name="Seshadri R."/>
            <person name="Joseph S.W."/>
            <person name="Chopra A.K."/>
            <person name="Sha J."/>
            <person name="Shaw J."/>
            <person name="Graf J."/>
            <person name="Haft D.H."/>
            <person name="Wu M."/>
            <person name="Ren Q."/>
            <person name="Rosovitz M.J."/>
            <person name="Madupu R."/>
            <person name="Tallon L."/>
            <person name="Kim M."/>
            <person name="Jin S."/>
            <person name="Vuong H."/>
            <person name="Stine O.C."/>
            <person name="Ali A."/>
            <person name="Horneman A.J."/>
            <person name="Heidelberg J.F."/>
        </authorList>
    </citation>
    <scope>NUCLEOTIDE SEQUENCE [LARGE SCALE GENOMIC DNA]</scope>
    <source>
        <strain>ATCC 7966 / DSM 30187 / BCRC 13018 / CCUG 14551 / JCM 1027 / KCTC 2358 / NCIMB 9240 / NCTC 8049</strain>
    </source>
</reference>
<feature type="chain" id="PRO_0000358948" description="Acetyl-coenzyme A carboxylase carboxyl transferase subunit beta">
    <location>
        <begin position="1"/>
        <end position="287"/>
    </location>
</feature>
<feature type="domain" description="CoA carboxyltransferase N-terminal" evidence="2">
    <location>
        <begin position="25"/>
        <end position="287"/>
    </location>
</feature>
<feature type="zinc finger region" description="C4-type" evidence="1">
    <location>
        <begin position="29"/>
        <end position="51"/>
    </location>
</feature>
<feature type="binding site" evidence="1">
    <location>
        <position position="29"/>
    </location>
    <ligand>
        <name>Zn(2+)</name>
        <dbReference type="ChEBI" id="CHEBI:29105"/>
    </ligand>
</feature>
<feature type="binding site" evidence="1">
    <location>
        <position position="32"/>
    </location>
    <ligand>
        <name>Zn(2+)</name>
        <dbReference type="ChEBI" id="CHEBI:29105"/>
    </ligand>
</feature>
<feature type="binding site" evidence="1">
    <location>
        <position position="48"/>
    </location>
    <ligand>
        <name>Zn(2+)</name>
        <dbReference type="ChEBI" id="CHEBI:29105"/>
    </ligand>
</feature>
<feature type="binding site" evidence="1">
    <location>
        <position position="51"/>
    </location>
    <ligand>
        <name>Zn(2+)</name>
        <dbReference type="ChEBI" id="CHEBI:29105"/>
    </ligand>
</feature>
<keyword id="KW-0067">ATP-binding</keyword>
<keyword id="KW-0963">Cytoplasm</keyword>
<keyword id="KW-0275">Fatty acid biosynthesis</keyword>
<keyword id="KW-0276">Fatty acid metabolism</keyword>
<keyword id="KW-0444">Lipid biosynthesis</keyword>
<keyword id="KW-0443">Lipid metabolism</keyword>
<keyword id="KW-0479">Metal-binding</keyword>
<keyword id="KW-0547">Nucleotide-binding</keyword>
<keyword id="KW-1185">Reference proteome</keyword>
<keyword id="KW-0808">Transferase</keyword>
<keyword id="KW-0862">Zinc</keyword>
<keyword id="KW-0863">Zinc-finger</keyword>
<protein>
    <recommendedName>
        <fullName evidence="1">Acetyl-coenzyme A carboxylase carboxyl transferase subunit beta</fullName>
        <shortName evidence="1">ACCase subunit beta</shortName>
        <shortName evidence="1">Acetyl-CoA carboxylase carboxyltransferase subunit beta</shortName>
        <ecNumber evidence="1">2.1.3.15</ecNumber>
    </recommendedName>
</protein>
<proteinExistence type="inferred from homology"/>
<gene>
    <name evidence="1" type="primary">accD</name>
    <name type="ordered locus">AHA_2679</name>
</gene>
<accession>A0KLN6</accession>
<comment type="function">
    <text evidence="1">Component of the acetyl coenzyme A carboxylase (ACC) complex. Biotin carboxylase (BC) catalyzes the carboxylation of biotin on its carrier protein (BCCP) and then the CO(2) group is transferred by the transcarboxylase to acetyl-CoA to form malonyl-CoA.</text>
</comment>
<comment type="catalytic activity">
    <reaction evidence="1">
        <text>N(6)-carboxybiotinyl-L-lysyl-[protein] + acetyl-CoA = N(6)-biotinyl-L-lysyl-[protein] + malonyl-CoA</text>
        <dbReference type="Rhea" id="RHEA:54728"/>
        <dbReference type="Rhea" id="RHEA-COMP:10505"/>
        <dbReference type="Rhea" id="RHEA-COMP:10506"/>
        <dbReference type="ChEBI" id="CHEBI:57288"/>
        <dbReference type="ChEBI" id="CHEBI:57384"/>
        <dbReference type="ChEBI" id="CHEBI:83144"/>
        <dbReference type="ChEBI" id="CHEBI:83145"/>
        <dbReference type="EC" id="2.1.3.15"/>
    </reaction>
</comment>
<comment type="cofactor">
    <cofactor evidence="1">
        <name>Zn(2+)</name>
        <dbReference type="ChEBI" id="CHEBI:29105"/>
    </cofactor>
    <text evidence="1">Binds 1 zinc ion per subunit.</text>
</comment>
<comment type="pathway">
    <text evidence="1">Lipid metabolism; malonyl-CoA biosynthesis; malonyl-CoA from acetyl-CoA: step 1/1.</text>
</comment>
<comment type="subunit">
    <text evidence="1">Acetyl-CoA carboxylase is a heterohexamer composed of biotin carboxyl carrier protein (AccB), biotin carboxylase (AccC) and two subunits each of ACCase subunit alpha (AccA) and ACCase subunit beta (AccD).</text>
</comment>
<comment type="subcellular location">
    <subcellularLocation>
        <location evidence="1">Cytoplasm</location>
    </subcellularLocation>
</comment>
<comment type="similarity">
    <text evidence="1">Belongs to the AccD/PCCB family.</text>
</comment>
<name>ACCD_AERHH</name>
<organism>
    <name type="scientific">Aeromonas hydrophila subsp. hydrophila (strain ATCC 7966 / DSM 30187 / BCRC 13018 / CCUG 14551 / JCM 1027 / KCTC 2358 / NCIMB 9240 / NCTC 8049)</name>
    <dbReference type="NCBI Taxonomy" id="380703"/>
    <lineage>
        <taxon>Bacteria</taxon>
        <taxon>Pseudomonadati</taxon>
        <taxon>Pseudomonadota</taxon>
        <taxon>Gammaproteobacteria</taxon>
        <taxon>Aeromonadales</taxon>
        <taxon>Aeromonadaceae</taxon>
        <taxon>Aeromonas</taxon>
    </lineage>
</organism>
<dbReference type="EC" id="2.1.3.15" evidence="1"/>
<dbReference type="EMBL" id="CP000462">
    <property type="protein sequence ID" value="ABK39138.1"/>
    <property type="molecule type" value="Genomic_DNA"/>
</dbReference>
<dbReference type="RefSeq" id="WP_011706493.1">
    <property type="nucleotide sequence ID" value="NC_008570.1"/>
</dbReference>
<dbReference type="RefSeq" id="YP_857187.1">
    <property type="nucleotide sequence ID" value="NC_008570.1"/>
</dbReference>
<dbReference type="SMR" id="A0KLN6"/>
<dbReference type="STRING" id="380703.AHA_2679"/>
<dbReference type="EnsemblBacteria" id="ABK39138">
    <property type="protein sequence ID" value="ABK39138"/>
    <property type="gene ID" value="AHA_2679"/>
</dbReference>
<dbReference type="GeneID" id="4490656"/>
<dbReference type="KEGG" id="aha:AHA_2679"/>
<dbReference type="PATRIC" id="fig|380703.7.peg.2684"/>
<dbReference type="eggNOG" id="COG0777">
    <property type="taxonomic scope" value="Bacteria"/>
</dbReference>
<dbReference type="HOGENOM" id="CLU_015486_1_0_6"/>
<dbReference type="OrthoDB" id="9772975at2"/>
<dbReference type="UniPathway" id="UPA00655">
    <property type="reaction ID" value="UER00711"/>
</dbReference>
<dbReference type="Proteomes" id="UP000000756">
    <property type="component" value="Chromosome"/>
</dbReference>
<dbReference type="GO" id="GO:0009329">
    <property type="term" value="C:acetate CoA-transferase complex"/>
    <property type="evidence" value="ECO:0007669"/>
    <property type="project" value="TreeGrafter"/>
</dbReference>
<dbReference type="GO" id="GO:0003989">
    <property type="term" value="F:acetyl-CoA carboxylase activity"/>
    <property type="evidence" value="ECO:0007669"/>
    <property type="project" value="InterPro"/>
</dbReference>
<dbReference type="GO" id="GO:0005524">
    <property type="term" value="F:ATP binding"/>
    <property type="evidence" value="ECO:0007669"/>
    <property type="project" value="UniProtKB-KW"/>
</dbReference>
<dbReference type="GO" id="GO:0016743">
    <property type="term" value="F:carboxyl- or carbamoyltransferase activity"/>
    <property type="evidence" value="ECO:0007669"/>
    <property type="project" value="UniProtKB-UniRule"/>
</dbReference>
<dbReference type="GO" id="GO:0008270">
    <property type="term" value="F:zinc ion binding"/>
    <property type="evidence" value="ECO:0007669"/>
    <property type="project" value="UniProtKB-UniRule"/>
</dbReference>
<dbReference type="GO" id="GO:0006633">
    <property type="term" value="P:fatty acid biosynthetic process"/>
    <property type="evidence" value="ECO:0007669"/>
    <property type="project" value="UniProtKB-KW"/>
</dbReference>
<dbReference type="GO" id="GO:2001295">
    <property type="term" value="P:malonyl-CoA biosynthetic process"/>
    <property type="evidence" value="ECO:0007669"/>
    <property type="project" value="UniProtKB-UniRule"/>
</dbReference>
<dbReference type="Gene3D" id="3.90.226.10">
    <property type="entry name" value="2-enoyl-CoA Hydratase, Chain A, domain 1"/>
    <property type="match status" value="1"/>
</dbReference>
<dbReference type="HAMAP" id="MF_01395">
    <property type="entry name" value="AcetylCoA_CT_beta"/>
    <property type="match status" value="1"/>
</dbReference>
<dbReference type="InterPro" id="IPR034733">
    <property type="entry name" value="AcCoA_carboxyl_beta"/>
</dbReference>
<dbReference type="InterPro" id="IPR000438">
    <property type="entry name" value="Acetyl_CoA_COase_Trfase_b_su"/>
</dbReference>
<dbReference type="InterPro" id="IPR029045">
    <property type="entry name" value="ClpP/crotonase-like_dom_sf"/>
</dbReference>
<dbReference type="InterPro" id="IPR011762">
    <property type="entry name" value="COA_CT_N"/>
</dbReference>
<dbReference type="InterPro" id="IPR041010">
    <property type="entry name" value="Znf-ACC"/>
</dbReference>
<dbReference type="NCBIfam" id="TIGR00515">
    <property type="entry name" value="accD"/>
    <property type="match status" value="1"/>
</dbReference>
<dbReference type="PANTHER" id="PTHR42995">
    <property type="entry name" value="ACETYL-COENZYME A CARBOXYLASE CARBOXYL TRANSFERASE SUBUNIT BETA, CHLOROPLASTIC"/>
    <property type="match status" value="1"/>
</dbReference>
<dbReference type="PANTHER" id="PTHR42995:SF5">
    <property type="entry name" value="ACETYL-COENZYME A CARBOXYLASE CARBOXYL TRANSFERASE SUBUNIT BETA, CHLOROPLASTIC"/>
    <property type="match status" value="1"/>
</dbReference>
<dbReference type="Pfam" id="PF01039">
    <property type="entry name" value="Carboxyl_trans"/>
    <property type="match status" value="1"/>
</dbReference>
<dbReference type="Pfam" id="PF17848">
    <property type="entry name" value="Zn_ribbon_ACC"/>
    <property type="match status" value="1"/>
</dbReference>
<dbReference type="PRINTS" id="PR01070">
    <property type="entry name" value="ACCCTRFRASEB"/>
</dbReference>
<dbReference type="SUPFAM" id="SSF52096">
    <property type="entry name" value="ClpP/crotonase"/>
    <property type="match status" value="1"/>
</dbReference>
<dbReference type="PROSITE" id="PS50980">
    <property type="entry name" value="COA_CT_NTER"/>
    <property type="match status" value="1"/>
</dbReference>
<sequence>MSWLEKILPKSKITTPRRHNIPEGVWTKCSACEQVLYRAELERNLEVCPKCDHHMRISARARLESFLDEQGRTEIGAELEPQDVLKFKDSKRYKDRLSAAQKETGEKDALVVMKGTLKGVPVVACSFEFSFIGGSMSSVVGARFVRAVEESIKEGRGLVCFSTSGGARMQEALFSLMQMAKTSAALDRLSKAGLPYISVLTDPTMGGVSASLAMLGDINVGEPKALIGFAGPRVIEQTVREKLPEGFQRSEFLLEKGAIDLIIDRREMRNRLASLLAKMLNTHVIEE</sequence>